<proteinExistence type="inferred from homology"/>
<evidence type="ECO:0000250" key="1">
    <source>
        <dbReference type="UniProtKB" id="P04798"/>
    </source>
</evidence>
<evidence type="ECO:0000255" key="2"/>
<evidence type="ECO:0000269" key="3">
    <source>
    </source>
</evidence>
<evidence type="ECO:0000303" key="4">
    <source>
    </source>
</evidence>
<evidence type="ECO:0000303" key="5">
    <source>
    </source>
</evidence>
<evidence type="ECO:0000305" key="6"/>
<evidence type="ECO:0000305" key="7">
    <source>
    </source>
</evidence>
<protein>
    <recommendedName>
        <fullName evidence="5">Cytochrome P450 monooxygenase fsdH</fullName>
        <ecNumber evidence="7">1.-.-.-</ecNumber>
    </recommendedName>
    <alternativeName>
        <fullName evidence="5">Fusaridione A biosynthesis protein H</fullName>
    </alternativeName>
</protein>
<organism>
    <name type="scientific">Fusarium heterosporum</name>
    <dbReference type="NCBI Taxonomy" id="42747"/>
    <lineage>
        <taxon>Eukaryota</taxon>
        <taxon>Fungi</taxon>
        <taxon>Dikarya</taxon>
        <taxon>Ascomycota</taxon>
        <taxon>Pezizomycotina</taxon>
        <taxon>Sordariomycetes</taxon>
        <taxon>Hypocreomycetidae</taxon>
        <taxon>Hypocreales</taxon>
        <taxon>Nectriaceae</taxon>
        <taxon>Fusarium</taxon>
        <taxon>Fusarium heterosporum species complex</taxon>
    </lineage>
</organism>
<name>FSDH_FUSHE</name>
<feature type="chain" id="PRO_0000441315" description="Cytochrome P450 monooxygenase fsdH">
    <location>
        <begin position="1"/>
        <end position="564"/>
    </location>
</feature>
<feature type="transmembrane region" description="Helical" evidence="2">
    <location>
        <begin position="18"/>
        <end position="38"/>
    </location>
</feature>
<feature type="binding site" description="axial binding residue" evidence="1">
    <location>
        <position position="472"/>
    </location>
    <ligand>
        <name>heme</name>
        <dbReference type="ChEBI" id="CHEBI:30413"/>
    </ligand>
    <ligandPart>
        <name>Fe</name>
        <dbReference type="ChEBI" id="CHEBI:18248"/>
    </ligandPart>
</feature>
<accession>S0ARX1</accession>
<dbReference type="EC" id="1.-.-.-" evidence="7"/>
<dbReference type="EMBL" id="AY700570">
    <property type="protein sequence ID" value="AGO65988.1"/>
    <property type="molecule type" value="Genomic_DNA"/>
</dbReference>
<dbReference type="SMR" id="S0ARX1"/>
<dbReference type="GO" id="GO:0016020">
    <property type="term" value="C:membrane"/>
    <property type="evidence" value="ECO:0007669"/>
    <property type="project" value="UniProtKB-SubCell"/>
</dbReference>
<dbReference type="GO" id="GO:0020037">
    <property type="term" value="F:heme binding"/>
    <property type="evidence" value="ECO:0007669"/>
    <property type="project" value="InterPro"/>
</dbReference>
<dbReference type="GO" id="GO:0005506">
    <property type="term" value="F:iron ion binding"/>
    <property type="evidence" value="ECO:0007669"/>
    <property type="project" value="InterPro"/>
</dbReference>
<dbReference type="GO" id="GO:0016712">
    <property type="term" value="F:oxidoreductase activity, acting on paired donors, with incorporation or reduction of molecular oxygen, reduced flavin or flavoprotein as one donor, and incorporation of one atom of oxygen"/>
    <property type="evidence" value="ECO:0007669"/>
    <property type="project" value="InterPro"/>
</dbReference>
<dbReference type="CDD" id="cd11063">
    <property type="entry name" value="CYP52"/>
    <property type="match status" value="1"/>
</dbReference>
<dbReference type="Gene3D" id="1.10.630.10">
    <property type="entry name" value="Cytochrome P450"/>
    <property type="match status" value="1"/>
</dbReference>
<dbReference type="InterPro" id="IPR001128">
    <property type="entry name" value="Cyt_P450"/>
</dbReference>
<dbReference type="InterPro" id="IPR017972">
    <property type="entry name" value="Cyt_P450_CS"/>
</dbReference>
<dbReference type="InterPro" id="IPR002974">
    <property type="entry name" value="Cyt_P450_E_CYP52_ascomycetes"/>
</dbReference>
<dbReference type="InterPro" id="IPR047146">
    <property type="entry name" value="Cyt_P450_E_CYP52_fungi"/>
</dbReference>
<dbReference type="InterPro" id="IPR002402">
    <property type="entry name" value="Cyt_P450_E_grp-II"/>
</dbReference>
<dbReference type="InterPro" id="IPR036396">
    <property type="entry name" value="Cyt_P450_sf"/>
</dbReference>
<dbReference type="PANTHER" id="PTHR24287">
    <property type="entry name" value="P450, PUTATIVE (EUROFUNG)-RELATED"/>
    <property type="match status" value="1"/>
</dbReference>
<dbReference type="PANTHER" id="PTHR24287:SF17">
    <property type="entry name" value="P450, PUTATIVE (EUROFUNG)-RELATED"/>
    <property type="match status" value="1"/>
</dbReference>
<dbReference type="Pfam" id="PF00067">
    <property type="entry name" value="p450"/>
    <property type="match status" value="1"/>
</dbReference>
<dbReference type="PRINTS" id="PR00464">
    <property type="entry name" value="EP450II"/>
</dbReference>
<dbReference type="PRINTS" id="PR01239">
    <property type="entry name" value="EP450IICYP52"/>
</dbReference>
<dbReference type="PRINTS" id="PR00385">
    <property type="entry name" value="P450"/>
</dbReference>
<dbReference type="SUPFAM" id="SSF48264">
    <property type="entry name" value="Cytochrome P450"/>
    <property type="match status" value="1"/>
</dbReference>
<dbReference type="PROSITE" id="PS00086">
    <property type="entry name" value="CYTOCHROME_P450"/>
    <property type="match status" value="1"/>
</dbReference>
<gene>
    <name evidence="5" type="primary">fsdH</name>
    <name evidence="4" type="synonym">eqi5</name>
</gene>
<reference key="1">
    <citation type="journal article" date="2005" name="Chem. Commun. (Camb.)">
        <title>Equisetin biosynthesis in Fusarium heterosporum.</title>
        <authorList>
            <person name="Sims J.W."/>
            <person name="Fillmore J.P."/>
            <person name="Warner D.D."/>
            <person name="Schmidt E.W."/>
        </authorList>
    </citation>
    <scope>NUCLEOTIDE SEQUENCE [GENOMIC DNA]</scope>
    <source>
        <strain>ATCC 74349 / MF6069</strain>
    </source>
</reference>
<reference key="2">
    <citation type="journal article" date="2013" name="ACS Chem. Biol.">
        <title>Two related pyrrolidinedione synthetase loci in Fusarium heterosporum ATCC 74349 produce divergent metabolites.</title>
        <authorList>
            <person name="Kakule T.B."/>
            <person name="Sardar D."/>
            <person name="Lin Z."/>
            <person name="Schmidt E.W."/>
        </authorList>
    </citation>
    <scope>NUCLEOTIDE SEQUENCE [GENOMIC DNA]</scope>
    <scope>FUNCTION</scope>
    <scope>PATHWAY</scope>
    <source>
        <strain>ATCC 74349 / MF6069</strain>
    </source>
</reference>
<comment type="function">
    <text evidence="3">Cytochrome P450 monooxygenase; part of the gene cluster that mediates the biosynthesis of fusaridione A, a bright yellow trans-fused decalin-containing tetramic acid with antimicrobial activity (PubMed:23614392). The PKS module of fsdS catalyzes the formation of the polyketide unit which is then conjugated to L-tyrosine by the condensation domain of the fsdS NRPS module. Activity of the Dieckmann cyclase domain (RED) results in release of the intermediate fusaridione A (PubMed:23614392). The unstable pyrrolidinedione ring of fusaridione A is opened through a reverse-Dieckmann reaction to afford its ring-opened form (PubMed:23614392).</text>
</comment>
<comment type="cofactor">
    <cofactor evidence="1">
        <name>heme</name>
        <dbReference type="ChEBI" id="CHEBI:30413"/>
    </cofactor>
</comment>
<comment type="pathway">
    <text evidence="7">Mycotoxin biosynthesis.</text>
</comment>
<comment type="subcellular location">
    <subcellularLocation>
        <location evidence="2">Membrane</location>
        <topology evidence="2">Single-pass membrane protein</topology>
    </subcellularLocation>
</comment>
<comment type="similarity">
    <text evidence="6">Belongs to the cytochrome P450 family.</text>
</comment>
<sequence>MALTVFEHASALWYRLQGSVSLAVLSTLAVVIAGWYILSSISLYFSRRQFIALHGCKPIANRYPSKWFGINFILEAGRTYKERRYLDALTWNFRNIGYTHEVRALGGTSVWTVEPENIKAVLTSKFKDYSLGNRPAVMGPLLGRGVFVTDGEEWSHSRALLRPNFAKDQVADLSMIERHLQQLLKMIPDDGKAIDLNDLILSFTMDSSTEFLFGESTETLTSGINRQFSDAFAYSLHDISSGLRLGPWYKFRRTDPKAVQSHRICREYADKYVEKALEYRRNYIKSVEDGATDKPSIDGGDSRRTFLRELALATDDREKLRDELLSLLLAGRDTTASLIGSLLFSLAKKPECWEKVRSEIEETLHGDLPSYEQLRNFKYAKYCVNEALRLYPPVPNNAKIAIRDTVLPRGGGPEGRDPIIVPKDAPVIYTVYALHRRYDLFGDDADDFRPERWENQRYTWEFLPFNGGPRICLGQQYALVETLYVLVRFAQHFSKIESMDPEPWTESLALTVSSGNGVKVKLERGSSDVHGLSTQGVLIDYGGLFAPTQKVPGTGVTQISKGKA</sequence>
<keyword id="KW-0349">Heme</keyword>
<keyword id="KW-0408">Iron</keyword>
<keyword id="KW-0472">Membrane</keyword>
<keyword id="KW-0479">Metal-binding</keyword>
<keyword id="KW-0503">Monooxygenase</keyword>
<keyword id="KW-0560">Oxidoreductase</keyword>
<keyword id="KW-0812">Transmembrane</keyword>
<keyword id="KW-1133">Transmembrane helix</keyword>